<dbReference type="EC" id="6.1.1.10" evidence="1"/>
<dbReference type="EMBL" id="CP000606">
    <property type="protein sequence ID" value="ABO23440.1"/>
    <property type="molecule type" value="Genomic_DNA"/>
</dbReference>
<dbReference type="RefSeq" id="WP_011865372.1">
    <property type="nucleotide sequence ID" value="NC_009092.1"/>
</dbReference>
<dbReference type="SMR" id="A3QD92"/>
<dbReference type="STRING" id="323850.Shew_1573"/>
<dbReference type="KEGG" id="slo:Shew_1573"/>
<dbReference type="eggNOG" id="COG0073">
    <property type="taxonomic scope" value="Bacteria"/>
</dbReference>
<dbReference type="eggNOG" id="COG0143">
    <property type="taxonomic scope" value="Bacteria"/>
</dbReference>
<dbReference type="HOGENOM" id="CLU_009710_7_0_6"/>
<dbReference type="OrthoDB" id="9810191at2"/>
<dbReference type="Proteomes" id="UP000001558">
    <property type="component" value="Chromosome"/>
</dbReference>
<dbReference type="GO" id="GO:0005829">
    <property type="term" value="C:cytosol"/>
    <property type="evidence" value="ECO:0007669"/>
    <property type="project" value="TreeGrafter"/>
</dbReference>
<dbReference type="GO" id="GO:0005524">
    <property type="term" value="F:ATP binding"/>
    <property type="evidence" value="ECO:0007669"/>
    <property type="project" value="UniProtKB-UniRule"/>
</dbReference>
<dbReference type="GO" id="GO:0046872">
    <property type="term" value="F:metal ion binding"/>
    <property type="evidence" value="ECO:0007669"/>
    <property type="project" value="UniProtKB-KW"/>
</dbReference>
<dbReference type="GO" id="GO:0004825">
    <property type="term" value="F:methionine-tRNA ligase activity"/>
    <property type="evidence" value="ECO:0007669"/>
    <property type="project" value="UniProtKB-UniRule"/>
</dbReference>
<dbReference type="GO" id="GO:0000049">
    <property type="term" value="F:tRNA binding"/>
    <property type="evidence" value="ECO:0007669"/>
    <property type="project" value="UniProtKB-KW"/>
</dbReference>
<dbReference type="GO" id="GO:0006431">
    <property type="term" value="P:methionyl-tRNA aminoacylation"/>
    <property type="evidence" value="ECO:0007669"/>
    <property type="project" value="UniProtKB-UniRule"/>
</dbReference>
<dbReference type="CDD" id="cd07957">
    <property type="entry name" value="Anticodon_Ia_Met"/>
    <property type="match status" value="1"/>
</dbReference>
<dbReference type="CDD" id="cd00814">
    <property type="entry name" value="MetRS_core"/>
    <property type="match status" value="1"/>
</dbReference>
<dbReference type="CDD" id="cd02800">
    <property type="entry name" value="tRNA_bind_EcMetRS_like"/>
    <property type="match status" value="1"/>
</dbReference>
<dbReference type="FunFam" id="1.10.730.10:FF:000005">
    <property type="entry name" value="Methionine--tRNA ligase"/>
    <property type="match status" value="1"/>
</dbReference>
<dbReference type="FunFam" id="2.20.28.20:FF:000001">
    <property type="entry name" value="Methionine--tRNA ligase"/>
    <property type="match status" value="1"/>
</dbReference>
<dbReference type="FunFam" id="2.40.50.140:FF:000042">
    <property type="entry name" value="Methionine--tRNA ligase"/>
    <property type="match status" value="1"/>
</dbReference>
<dbReference type="Gene3D" id="3.40.50.620">
    <property type="entry name" value="HUPs"/>
    <property type="match status" value="1"/>
</dbReference>
<dbReference type="Gene3D" id="1.10.730.10">
    <property type="entry name" value="Isoleucyl-tRNA Synthetase, Domain 1"/>
    <property type="match status" value="1"/>
</dbReference>
<dbReference type="Gene3D" id="2.20.28.20">
    <property type="entry name" value="Methionyl-tRNA synthetase, Zn-domain"/>
    <property type="match status" value="1"/>
</dbReference>
<dbReference type="Gene3D" id="2.40.50.140">
    <property type="entry name" value="Nucleic acid-binding proteins"/>
    <property type="match status" value="1"/>
</dbReference>
<dbReference type="HAMAP" id="MF_00098">
    <property type="entry name" value="Met_tRNA_synth_type1"/>
    <property type="match status" value="1"/>
</dbReference>
<dbReference type="InterPro" id="IPR001412">
    <property type="entry name" value="aa-tRNA-synth_I_CS"/>
</dbReference>
<dbReference type="InterPro" id="IPR041872">
    <property type="entry name" value="Anticodon_Met"/>
</dbReference>
<dbReference type="InterPro" id="IPR004495">
    <property type="entry name" value="Met-tRNA-synth_bsu_C"/>
</dbReference>
<dbReference type="InterPro" id="IPR023458">
    <property type="entry name" value="Met-tRNA_ligase_1"/>
</dbReference>
<dbReference type="InterPro" id="IPR014758">
    <property type="entry name" value="Met-tRNA_synth"/>
</dbReference>
<dbReference type="InterPro" id="IPR015413">
    <property type="entry name" value="Methionyl/Leucyl_tRNA_Synth"/>
</dbReference>
<dbReference type="InterPro" id="IPR033911">
    <property type="entry name" value="MetRS_core"/>
</dbReference>
<dbReference type="InterPro" id="IPR029038">
    <property type="entry name" value="MetRS_Zn"/>
</dbReference>
<dbReference type="InterPro" id="IPR012340">
    <property type="entry name" value="NA-bd_OB-fold"/>
</dbReference>
<dbReference type="InterPro" id="IPR014729">
    <property type="entry name" value="Rossmann-like_a/b/a_fold"/>
</dbReference>
<dbReference type="InterPro" id="IPR002547">
    <property type="entry name" value="tRNA-bd_dom"/>
</dbReference>
<dbReference type="InterPro" id="IPR009080">
    <property type="entry name" value="tRNAsynth_Ia_anticodon-bd"/>
</dbReference>
<dbReference type="NCBIfam" id="TIGR00398">
    <property type="entry name" value="metG"/>
    <property type="match status" value="1"/>
</dbReference>
<dbReference type="NCBIfam" id="TIGR00399">
    <property type="entry name" value="metG_C_term"/>
    <property type="match status" value="1"/>
</dbReference>
<dbReference type="NCBIfam" id="NF001100">
    <property type="entry name" value="PRK00133.1"/>
    <property type="match status" value="1"/>
</dbReference>
<dbReference type="PANTHER" id="PTHR45765">
    <property type="entry name" value="METHIONINE--TRNA LIGASE"/>
    <property type="match status" value="1"/>
</dbReference>
<dbReference type="PANTHER" id="PTHR45765:SF1">
    <property type="entry name" value="METHIONINE--TRNA LIGASE, CYTOPLASMIC"/>
    <property type="match status" value="1"/>
</dbReference>
<dbReference type="Pfam" id="PF19303">
    <property type="entry name" value="Anticodon_3"/>
    <property type="match status" value="1"/>
</dbReference>
<dbReference type="Pfam" id="PF09334">
    <property type="entry name" value="tRNA-synt_1g"/>
    <property type="match status" value="1"/>
</dbReference>
<dbReference type="Pfam" id="PF01588">
    <property type="entry name" value="tRNA_bind"/>
    <property type="match status" value="1"/>
</dbReference>
<dbReference type="PRINTS" id="PR01041">
    <property type="entry name" value="TRNASYNTHMET"/>
</dbReference>
<dbReference type="SUPFAM" id="SSF47323">
    <property type="entry name" value="Anticodon-binding domain of a subclass of class I aminoacyl-tRNA synthetases"/>
    <property type="match status" value="1"/>
</dbReference>
<dbReference type="SUPFAM" id="SSF57770">
    <property type="entry name" value="Methionyl-tRNA synthetase (MetRS), Zn-domain"/>
    <property type="match status" value="1"/>
</dbReference>
<dbReference type="SUPFAM" id="SSF50249">
    <property type="entry name" value="Nucleic acid-binding proteins"/>
    <property type="match status" value="1"/>
</dbReference>
<dbReference type="SUPFAM" id="SSF52374">
    <property type="entry name" value="Nucleotidylyl transferase"/>
    <property type="match status" value="1"/>
</dbReference>
<dbReference type="PROSITE" id="PS00178">
    <property type="entry name" value="AA_TRNA_LIGASE_I"/>
    <property type="match status" value="1"/>
</dbReference>
<dbReference type="PROSITE" id="PS50886">
    <property type="entry name" value="TRBD"/>
    <property type="match status" value="1"/>
</dbReference>
<protein>
    <recommendedName>
        <fullName evidence="1">Methionine--tRNA ligase</fullName>
        <ecNumber evidence="1">6.1.1.10</ecNumber>
    </recommendedName>
    <alternativeName>
        <fullName evidence="1">Methionyl-tRNA synthetase</fullName>
        <shortName evidence="1">MetRS</shortName>
    </alternativeName>
</protein>
<sequence length="673" mass="75916">MATSQRKILVTSALPYANGPIHLGHMLEYIQTDIWARFQKLRGHECHYICADDAHGTPIMLKAQQLSMAPEEMIAQVQKEHQQDFADFNIQFDNFHSTHSDENRELASEIYLKLRDGGYIKSKTISQLFDPEKSMFLPDRFVKGTCPKCKSVDQYGDNCDSCGATYSPTDLIDPKSAVSGATPVMKETEHFFFDLPAFEDMLKEWTRSGSLQQEMANKLGEWFEQGLQQWDITRDAPYFGFEIPDAPGKFFYVWLDAPIGYMGSFKNLCNKRSDLNFDEFWAKDSTAEVYHFIGKDIVYFHSLFWPAMLEGAGFRKPNSVYAHGYVTVNGAKMSKSKGTFIKARTYLDNLNPEYLRYYYAAKLSSRIDDLDLNLEDFAQRVNSDLVGKLVNLASRTAGFISKRFDGKLAKVADASLTETFLAKADAIAEFYETREFGKAMREIMALADIANAFVADAAPWQLVKEEDKQEEAHQVCSNALNLFRILVTYLKPVLPKLAQDVEAFLQLELTWDDLAKDLSGHEIAPFKALMQRVEMKNIEAIIEASTENLQVAEAPKSQLDLDPISEEISFDDFAKLDLRIARIAKAEHVPDANKLLKLQLDLGGETKQVFAGIKSAYAPEDLEGKLTVMVANLAPRKMRFGMSEGMVLAAGPGKKDLWILEPHEGAQPGMRVK</sequence>
<gene>
    <name evidence="1" type="primary">metG</name>
    <name type="ordered locus">Shew_1573</name>
</gene>
<feature type="chain" id="PRO_0000331907" description="Methionine--tRNA ligase">
    <location>
        <begin position="1"/>
        <end position="673"/>
    </location>
</feature>
<feature type="domain" description="tRNA-binding" evidence="1">
    <location>
        <begin position="572"/>
        <end position="673"/>
    </location>
</feature>
<feature type="short sequence motif" description="'HIGH' region">
    <location>
        <begin position="15"/>
        <end position="25"/>
    </location>
</feature>
<feature type="short sequence motif" description="'KMSKS' region">
    <location>
        <begin position="332"/>
        <end position="336"/>
    </location>
</feature>
<feature type="binding site" evidence="1">
    <location>
        <position position="146"/>
    </location>
    <ligand>
        <name>Zn(2+)</name>
        <dbReference type="ChEBI" id="CHEBI:29105"/>
    </ligand>
</feature>
<feature type="binding site" evidence="1">
    <location>
        <position position="149"/>
    </location>
    <ligand>
        <name>Zn(2+)</name>
        <dbReference type="ChEBI" id="CHEBI:29105"/>
    </ligand>
</feature>
<feature type="binding site" evidence="1">
    <location>
        <position position="159"/>
    </location>
    <ligand>
        <name>Zn(2+)</name>
        <dbReference type="ChEBI" id="CHEBI:29105"/>
    </ligand>
</feature>
<feature type="binding site" evidence="1">
    <location>
        <position position="162"/>
    </location>
    <ligand>
        <name>Zn(2+)</name>
        <dbReference type="ChEBI" id="CHEBI:29105"/>
    </ligand>
</feature>
<feature type="binding site" evidence="1">
    <location>
        <position position="335"/>
    </location>
    <ligand>
        <name>ATP</name>
        <dbReference type="ChEBI" id="CHEBI:30616"/>
    </ligand>
</feature>
<proteinExistence type="inferred from homology"/>
<keyword id="KW-0030">Aminoacyl-tRNA synthetase</keyword>
<keyword id="KW-0067">ATP-binding</keyword>
<keyword id="KW-0963">Cytoplasm</keyword>
<keyword id="KW-0436">Ligase</keyword>
<keyword id="KW-0479">Metal-binding</keyword>
<keyword id="KW-0547">Nucleotide-binding</keyword>
<keyword id="KW-0648">Protein biosynthesis</keyword>
<keyword id="KW-1185">Reference proteome</keyword>
<keyword id="KW-0694">RNA-binding</keyword>
<keyword id="KW-0820">tRNA-binding</keyword>
<keyword id="KW-0862">Zinc</keyword>
<reference key="1">
    <citation type="submission" date="2007-03" db="EMBL/GenBank/DDBJ databases">
        <title>Complete sequence of Shewanella loihica PV-4.</title>
        <authorList>
            <consortium name="US DOE Joint Genome Institute"/>
            <person name="Copeland A."/>
            <person name="Lucas S."/>
            <person name="Lapidus A."/>
            <person name="Barry K."/>
            <person name="Detter J.C."/>
            <person name="Glavina del Rio T."/>
            <person name="Hammon N."/>
            <person name="Israni S."/>
            <person name="Dalin E."/>
            <person name="Tice H."/>
            <person name="Pitluck S."/>
            <person name="Chain P."/>
            <person name="Malfatti S."/>
            <person name="Shin M."/>
            <person name="Vergez L."/>
            <person name="Schmutz J."/>
            <person name="Larimer F."/>
            <person name="Land M."/>
            <person name="Hauser L."/>
            <person name="Kyrpides N."/>
            <person name="Mikhailova N."/>
            <person name="Romine M.F."/>
            <person name="Serres G."/>
            <person name="Fredrickson J."/>
            <person name="Tiedje J."/>
            <person name="Richardson P."/>
        </authorList>
    </citation>
    <scope>NUCLEOTIDE SEQUENCE [LARGE SCALE GENOMIC DNA]</scope>
    <source>
        <strain>ATCC BAA-1088 / PV-4</strain>
    </source>
</reference>
<comment type="function">
    <text evidence="1">Is required not only for elongation of protein synthesis but also for the initiation of all mRNA translation through initiator tRNA(fMet) aminoacylation.</text>
</comment>
<comment type="catalytic activity">
    <reaction evidence="1">
        <text>tRNA(Met) + L-methionine + ATP = L-methionyl-tRNA(Met) + AMP + diphosphate</text>
        <dbReference type="Rhea" id="RHEA:13481"/>
        <dbReference type="Rhea" id="RHEA-COMP:9667"/>
        <dbReference type="Rhea" id="RHEA-COMP:9698"/>
        <dbReference type="ChEBI" id="CHEBI:30616"/>
        <dbReference type="ChEBI" id="CHEBI:33019"/>
        <dbReference type="ChEBI" id="CHEBI:57844"/>
        <dbReference type="ChEBI" id="CHEBI:78442"/>
        <dbReference type="ChEBI" id="CHEBI:78530"/>
        <dbReference type="ChEBI" id="CHEBI:456215"/>
        <dbReference type="EC" id="6.1.1.10"/>
    </reaction>
</comment>
<comment type="cofactor">
    <cofactor evidence="1">
        <name>Zn(2+)</name>
        <dbReference type="ChEBI" id="CHEBI:29105"/>
    </cofactor>
    <text evidence="1">Binds 1 zinc ion per subunit.</text>
</comment>
<comment type="subunit">
    <text evidence="1">Homodimer.</text>
</comment>
<comment type="subcellular location">
    <subcellularLocation>
        <location evidence="1">Cytoplasm</location>
    </subcellularLocation>
</comment>
<comment type="similarity">
    <text evidence="1">Belongs to the class-I aminoacyl-tRNA synthetase family. MetG type 1 subfamily.</text>
</comment>
<name>SYM_SHELP</name>
<accession>A3QD92</accession>
<evidence type="ECO:0000255" key="1">
    <source>
        <dbReference type="HAMAP-Rule" id="MF_00098"/>
    </source>
</evidence>
<organism>
    <name type="scientific">Shewanella loihica (strain ATCC BAA-1088 / PV-4)</name>
    <dbReference type="NCBI Taxonomy" id="323850"/>
    <lineage>
        <taxon>Bacteria</taxon>
        <taxon>Pseudomonadati</taxon>
        <taxon>Pseudomonadota</taxon>
        <taxon>Gammaproteobacteria</taxon>
        <taxon>Alteromonadales</taxon>
        <taxon>Shewanellaceae</taxon>
        <taxon>Shewanella</taxon>
    </lineage>
</organism>